<reference key="1">
    <citation type="journal article" date="2003" name="Nature">
        <title>Genome sequence of Bacillus cereus and comparative analysis with Bacillus anthracis.</title>
        <authorList>
            <person name="Ivanova N."/>
            <person name="Sorokin A."/>
            <person name="Anderson I."/>
            <person name="Galleron N."/>
            <person name="Candelon B."/>
            <person name="Kapatral V."/>
            <person name="Bhattacharyya A."/>
            <person name="Reznik G."/>
            <person name="Mikhailova N."/>
            <person name="Lapidus A."/>
            <person name="Chu L."/>
            <person name="Mazur M."/>
            <person name="Goltsman E."/>
            <person name="Larsen N."/>
            <person name="D'Souza M."/>
            <person name="Walunas T."/>
            <person name="Grechkin Y."/>
            <person name="Pusch G."/>
            <person name="Haselkorn R."/>
            <person name="Fonstein M."/>
            <person name="Ehrlich S.D."/>
            <person name="Overbeek R."/>
            <person name="Kyrpides N.C."/>
        </authorList>
    </citation>
    <scope>NUCLEOTIDE SEQUENCE [LARGE SCALE GENOMIC DNA]</scope>
    <source>
        <strain>ATCC 14579 / DSM 31 / CCUG 7414 / JCM 2152 / NBRC 15305 / NCIMB 9373 / NCTC 2599 / NRRL B-3711</strain>
    </source>
</reference>
<protein>
    <recommendedName>
        <fullName evidence="1">ATP synthase gamma chain</fullName>
    </recommendedName>
    <alternativeName>
        <fullName evidence="1">ATP synthase F1 sector gamma subunit</fullName>
    </alternativeName>
    <alternativeName>
        <fullName evidence="1">F-ATPase gamma subunit</fullName>
    </alternativeName>
</protein>
<feature type="chain" id="PRO_0000073226" description="ATP synthase gamma chain">
    <location>
        <begin position="1"/>
        <end position="286"/>
    </location>
</feature>
<name>ATPG_BACCR</name>
<proteinExistence type="inferred from homology"/>
<evidence type="ECO:0000255" key="1">
    <source>
        <dbReference type="HAMAP-Rule" id="MF_00815"/>
    </source>
</evidence>
<accession>Q814W1</accession>
<sequence>MASLRDIKAKINSTKKTSQITKAMEMVSASKLNRAEQNAKSFVPYMEKIQEVVASIAQGSKGINHPMLNARPVKRTGYIVITSDRGLAGGYNSNVLRTVSNVIRERHNMDSNQYSIIVLGRLGRDYLKRRGFNIIDEVVGLSDHPSFTDIKDLASRAIAMFADGAYDELYIYYNHYVSKISQEVTENKILPLTDVASDKPTTAYEFEPSEEEILKVLLPQYAESLVYGALLDGKASEHAARMTAMKSATDNAMEVIDSLTLSFNRARQAAITQEITEIVGGAAALE</sequence>
<keyword id="KW-0066">ATP synthesis</keyword>
<keyword id="KW-1003">Cell membrane</keyword>
<keyword id="KW-0139">CF(1)</keyword>
<keyword id="KW-0375">Hydrogen ion transport</keyword>
<keyword id="KW-0406">Ion transport</keyword>
<keyword id="KW-0472">Membrane</keyword>
<keyword id="KW-1185">Reference proteome</keyword>
<keyword id="KW-0813">Transport</keyword>
<gene>
    <name evidence="1" type="primary">atpG</name>
    <name type="ordered locus">BC_5307</name>
</gene>
<organism>
    <name type="scientific">Bacillus cereus (strain ATCC 14579 / DSM 31 / CCUG 7414 / JCM 2152 / NBRC 15305 / NCIMB 9373 / NCTC 2599 / NRRL B-3711)</name>
    <dbReference type="NCBI Taxonomy" id="226900"/>
    <lineage>
        <taxon>Bacteria</taxon>
        <taxon>Bacillati</taxon>
        <taxon>Bacillota</taxon>
        <taxon>Bacilli</taxon>
        <taxon>Bacillales</taxon>
        <taxon>Bacillaceae</taxon>
        <taxon>Bacillus</taxon>
        <taxon>Bacillus cereus group</taxon>
    </lineage>
</organism>
<comment type="function">
    <text evidence="1">Produces ATP from ADP in the presence of a proton gradient across the membrane. The gamma chain is believed to be important in regulating ATPase activity and the flow of protons through the CF(0) complex.</text>
</comment>
<comment type="subunit">
    <text evidence="1">F-type ATPases have 2 components, CF(1) - the catalytic core - and CF(0) - the membrane proton channel. CF(1) has five subunits: alpha(3), beta(3), gamma(1), delta(1), epsilon(1). CF(0) has three main subunits: a, b and c.</text>
</comment>
<comment type="subcellular location">
    <subcellularLocation>
        <location evidence="1">Cell membrane</location>
        <topology evidence="1">Peripheral membrane protein</topology>
    </subcellularLocation>
</comment>
<comment type="similarity">
    <text evidence="1">Belongs to the ATPase gamma chain family.</text>
</comment>
<dbReference type="EMBL" id="AE016877">
    <property type="protein sequence ID" value="AAP12170.1"/>
    <property type="molecule type" value="Genomic_DNA"/>
</dbReference>
<dbReference type="RefSeq" id="NP_834969.1">
    <property type="nucleotide sequence ID" value="NC_004722.1"/>
</dbReference>
<dbReference type="RefSeq" id="WP_000157696.1">
    <property type="nucleotide sequence ID" value="NZ_CP138336.1"/>
</dbReference>
<dbReference type="SMR" id="Q814W1"/>
<dbReference type="STRING" id="226900.BC_5307"/>
<dbReference type="GeneID" id="93005817"/>
<dbReference type="KEGG" id="bce:BC5307"/>
<dbReference type="PATRIC" id="fig|226900.8.peg.5479"/>
<dbReference type="HOGENOM" id="CLU_050669_0_1_9"/>
<dbReference type="OrthoDB" id="9812769at2"/>
<dbReference type="Proteomes" id="UP000001417">
    <property type="component" value="Chromosome"/>
</dbReference>
<dbReference type="GO" id="GO:0005886">
    <property type="term" value="C:plasma membrane"/>
    <property type="evidence" value="ECO:0007669"/>
    <property type="project" value="UniProtKB-SubCell"/>
</dbReference>
<dbReference type="GO" id="GO:0045259">
    <property type="term" value="C:proton-transporting ATP synthase complex"/>
    <property type="evidence" value="ECO:0007669"/>
    <property type="project" value="UniProtKB-KW"/>
</dbReference>
<dbReference type="GO" id="GO:0005524">
    <property type="term" value="F:ATP binding"/>
    <property type="evidence" value="ECO:0007669"/>
    <property type="project" value="UniProtKB-UniRule"/>
</dbReference>
<dbReference type="GO" id="GO:0046933">
    <property type="term" value="F:proton-transporting ATP synthase activity, rotational mechanism"/>
    <property type="evidence" value="ECO:0007669"/>
    <property type="project" value="UniProtKB-UniRule"/>
</dbReference>
<dbReference type="GO" id="GO:0015986">
    <property type="term" value="P:proton motive force-driven ATP synthesis"/>
    <property type="evidence" value="ECO:0000318"/>
    <property type="project" value="GO_Central"/>
</dbReference>
<dbReference type="GO" id="GO:0042777">
    <property type="term" value="P:proton motive force-driven plasma membrane ATP synthesis"/>
    <property type="evidence" value="ECO:0007669"/>
    <property type="project" value="UniProtKB-UniRule"/>
</dbReference>
<dbReference type="CDD" id="cd12151">
    <property type="entry name" value="F1-ATPase_gamma"/>
    <property type="match status" value="1"/>
</dbReference>
<dbReference type="FunFam" id="3.40.1380.10:FF:000002">
    <property type="entry name" value="ATP synthase gamma chain"/>
    <property type="match status" value="1"/>
</dbReference>
<dbReference type="Gene3D" id="3.40.1380.10">
    <property type="match status" value="1"/>
</dbReference>
<dbReference type="Gene3D" id="1.10.287.80">
    <property type="entry name" value="ATP synthase, gamma subunit, helix hairpin domain"/>
    <property type="match status" value="1"/>
</dbReference>
<dbReference type="HAMAP" id="MF_00815">
    <property type="entry name" value="ATP_synth_gamma_bact"/>
    <property type="match status" value="1"/>
</dbReference>
<dbReference type="InterPro" id="IPR035968">
    <property type="entry name" value="ATP_synth_F1_ATPase_gsu"/>
</dbReference>
<dbReference type="InterPro" id="IPR000131">
    <property type="entry name" value="ATP_synth_F1_gsu"/>
</dbReference>
<dbReference type="InterPro" id="IPR023632">
    <property type="entry name" value="ATP_synth_F1_gsu_CS"/>
</dbReference>
<dbReference type="NCBIfam" id="TIGR01146">
    <property type="entry name" value="ATPsyn_F1gamma"/>
    <property type="match status" value="1"/>
</dbReference>
<dbReference type="PANTHER" id="PTHR11693">
    <property type="entry name" value="ATP SYNTHASE GAMMA CHAIN"/>
    <property type="match status" value="1"/>
</dbReference>
<dbReference type="PANTHER" id="PTHR11693:SF22">
    <property type="entry name" value="ATP SYNTHASE SUBUNIT GAMMA, MITOCHONDRIAL"/>
    <property type="match status" value="1"/>
</dbReference>
<dbReference type="Pfam" id="PF00231">
    <property type="entry name" value="ATP-synt"/>
    <property type="match status" value="1"/>
</dbReference>
<dbReference type="PRINTS" id="PR00126">
    <property type="entry name" value="ATPASEGAMMA"/>
</dbReference>
<dbReference type="SUPFAM" id="SSF52943">
    <property type="entry name" value="ATP synthase (F1-ATPase), gamma subunit"/>
    <property type="match status" value="1"/>
</dbReference>
<dbReference type="PROSITE" id="PS00153">
    <property type="entry name" value="ATPASE_GAMMA"/>
    <property type="match status" value="1"/>
</dbReference>